<gene>
    <name evidence="1" type="primary">CIAO1</name>
    <name evidence="12" type="synonym">CIA1</name>
    <name type="synonym">WDR39</name>
</gene>
<reference key="1">
    <citation type="journal article" date="1998" name="J. Biol. Chem.">
        <title>Ciao 1 is a novel WD40 protein that interacts with the tumor suppressor protein WT1.</title>
        <authorList>
            <person name="Johnstone R.W."/>
            <person name="Wang J."/>
            <person name="Tommerup N."/>
            <person name="Vissing H."/>
            <person name="Roberts T."/>
            <person name="Shi Y."/>
        </authorList>
    </citation>
    <scope>NUCLEOTIDE SEQUENCE [MRNA]</scope>
    <scope>INTERACTION WITH WT1</scope>
</reference>
<reference key="2">
    <citation type="journal article" date="2006" name="Nat. Cell Biol.">
        <title>CUL4-DDB1 ubiquitin ligase interacts with multiple WD40-repeat proteins and regulates histone methylation.</title>
        <authorList>
            <person name="Higa L.A."/>
            <person name="Wu M."/>
            <person name="Ye T."/>
            <person name="Kobayashi R."/>
            <person name="Sun H."/>
            <person name="Zhang H."/>
        </authorList>
    </citation>
    <scope>NUCLEOTIDE SEQUENCE [MRNA]</scope>
</reference>
<reference key="3">
    <citation type="journal article" date="1999" name="Genomics">
        <title>Genome duplications and other features in 12 Mb of DNA sequence from human chromosome 16p and 16q.</title>
        <authorList>
            <person name="Loftus B.J."/>
            <person name="Kim U.-J."/>
            <person name="Sneddon V.P."/>
            <person name="Kalush F."/>
            <person name="Brandon R."/>
            <person name="Fuhrmann J."/>
            <person name="Mason T."/>
            <person name="Crosby M.L."/>
            <person name="Barnstead M."/>
            <person name="Cronin L."/>
            <person name="Mays A.D."/>
            <person name="Cao Y."/>
            <person name="Xu R.X."/>
            <person name="Kang H.-L."/>
            <person name="Mitchell S."/>
            <person name="Eichler E.E."/>
            <person name="Harris P.C."/>
            <person name="Venter J.C."/>
            <person name="Adams M.D."/>
        </authorList>
    </citation>
    <scope>NUCLEOTIDE SEQUENCE [LARGE SCALE GENOMIC DNA]</scope>
</reference>
<reference key="4">
    <citation type="submission" date="2004-06" db="EMBL/GenBank/DDBJ databases">
        <title>Cloning of human full open reading frames in Gateway(TM) system entry vector (pDONR201).</title>
        <authorList>
            <person name="Ebert L."/>
            <person name="Schick M."/>
            <person name="Neubert P."/>
            <person name="Schatten R."/>
            <person name="Henze S."/>
            <person name="Korn B."/>
        </authorList>
    </citation>
    <scope>NUCLEOTIDE SEQUENCE [LARGE SCALE MRNA]</scope>
</reference>
<reference key="5">
    <citation type="submission" date="2005-04" db="EMBL/GenBank/DDBJ databases">
        <authorList>
            <person name="Suzuki Y."/>
            <person name="Sugano S."/>
            <person name="Totoki Y."/>
            <person name="Toyoda A."/>
            <person name="Takeda T."/>
            <person name="Sakaki Y."/>
            <person name="Tanaka A."/>
            <person name="Yokoyama S."/>
        </authorList>
    </citation>
    <scope>NUCLEOTIDE SEQUENCE [LARGE SCALE MRNA]</scope>
    <source>
        <tissue>Gastric mucosa</tissue>
    </source>
</reference>
<reference key="6">
    <citation type="journal article" date="2004" name="Genome Res.">
        <title>The status, quality, and expansion of the NIH full-length cDNA project: the Mammalian Gene Collection (MGC).</title>
        <authorList>
            <consortium name="The MGC Project Team"/>
        </authorList>
    </citation>
    <scope>NUCLEOTIDE SEQUENCE [LARGE SCALE MRNA]</scope>
    <source>
        <tissue>Blood</tissue>
        <tissue>Skin</tissue>
    </source>
</reference>
<reference key="7">
    <citation type="journal article" date="1999" name="Immunogenetics">
        <title>Structural organization, tissue expression, and chromosomal localization of Ciao 1, a functional modulator of the Wilms' tumor suppressor, WT1.</title>
        <authorList>
            <person name="Johnstone R.W."/>
            <person name="Tommerup N."/>
            <person name="Hansen C."/>
            <person name="Vissing H."/>
            <person name="Shi Y."/>
        </authorList>
    </citation>
    <scope>CHARACTERIZATION</scope>
</reference>
<reference key="8">
    <citation type="journal article" date="2007" name="Structure">
        <title>Structure of the yeast WD40 domain protein Cia1, a component acting late in iron-sulfur protein biogenesis.</title>
        <authorList>
            <person name="Srinivasan V."/>
            <person name="Netz D.J.A."/>
            <person name="Webert H."/>
            <person name="Mascarenhas J."/>
            <person name="Pierik A.J."/>
            <person name="Michel H."/>
            <person name="Lill R."/>
        </authorList>
    </citation>
    <scope>FUNCTION</scope>
</reference>
<reference key="9">
    <citation type="journal article" date="2010" name="Mol. Cell">
        <title>MMXD, a TFIIH-independent XPD-MMS19 protein complex involved in chromosome segregation.</title>
        <authorList>
            <person name="Ito S."/>
            <person name="Tan L.J."/>
            <person name="Andoh D."/>
            <person name="Narita T."/>
            <person name="Seki M."/>
            <person name="Hirano Y."/>
            <person name="Narita K."/>
            <person name="Kuraoka I."/>
            <person name="Hiraoka Y."/>
            <person name="Tanaka K."/>
        </authorList>
    </citation>
    <scope>FUNCTION</scope>
    <scope>IDENTIFICATION IN MMXD COMPLEX</scope>
</reference>
<reference key="10">
    <citation type="journal article" date="2011" name="BMC Syst. Biol.">
        <title>Initial characterization of the human central proteome.</title>
        <authorList>
            <person name="Burkard T.R."/>
            <person name="Planyavsky M."/>
            <person name="Kaupe I."/>
            <person name="Breitwieser F.P."/>
            <person name="Buerckstuemmer T."/>
            <person name="Bennett K.L."/>
            <person name="Superti-Furga G."/>
            <person name="Colinge J."/>
        </authorList>
    </citation>
    <scope>IDENTIFICATION BY MASS SPECTROMETRY [LARGE SCALE ANALYSIS]</scope>
</reference>
<reference key="11">
    <citation type="journal article" date="2012" name="Acta Crystallogr. D">
        <title>The mammalian DUF59 protein Fam96a forms two distinct types of domain-swapped dimer.</title>
        <authorList>
            <person name="Chen K.E."/>
            <person name="Richards A.A."/>
            <person name="Ariffin J.K."/>
            <person name="Ross I.L."/>
            <person name="Sweet M.J."/>
            <person name="Kellie S."/>
            <person name="Kobe B."/>
            <person name="Martin J.L."/>
        </authorList>
    </citation>
    <scope>INTERACTION WITH CIAO2A</scope>
</reference>
<reference key="12">
    <citation type="journal article" date="2012" name="Proc. Natl. Acad. Sci. U.S.A.">
        <title>N-terminal acetylome analyses and functional insights of the N-terminal acetyltransferase NatB.</title>
        <authorList>
            <person name="Van Damme P."/>
            <person name="Lasa M."/>
            <person name="Polevoda B."/>
            <person name="Gazquez C."/>
            <person name="Elosegui-Artola A."/>
            <person name="Kim D.S."/>
            <person name="De Juan-Pardo E."/>
            <person name="Demeyer K."/>
            <person name="Hole K."/>
            <person name="Larrea E."/>
            <person name="Timmerman E."/>
            <person name="Prieto J."/>
            <person name="Arnesen T."/>
            <person name="Sherman F."/>
            <person name="Gevaert K."/>
            <person name="Aldabe R."/>
        </authorList>
    </citation>
    <scope>IDENTIFICATION BY MASS SPECTROMETRY [LARGE SCALE ANALYSIS]</scope>
</reference>
<reference key="13">
    <citation type="journal article" date="2012" name="Science">
        <title>MMS19 assembles iron-sulfur proteins required for DNA metabolism and genomic integrity.</title>
        <authorList>
            <person name="Stehling O."/>
            <person name="Vashisht A.A."/>
            <person name="Mascarenhas J."/>
            <person name="Jonsson Z.O."/>
            <person name="Sharma T."/>
            <person name="Netz D.J."/>
            <person name="Pierik A.J."/>
            <person name="Wohlschlegel J.A."/>
            <person name="Lill R."/>
        </authorList>
    </citation>
    <scope>IDENTIFICATION IN THE CIA COMPLEX</scope>
</reference>
<reference key="14">
    <citation type="journal article" date="2012" name="Science">
        <title>MMS19 links cytoplasmic iron-sulfur cluster assembly to DNA metabolism.</title>
        <authorList>
            <person name="Gari K."/>
            <person name="Leon Ortiz A.M."/>
            <person name="Borel V."/>
            <person name="Flynn H."/>
            <person name="Skehel J.M."/>
            <person name="Boulton S.J."/>
        </authorList>
    </citation>
    <scope>IDENTIFICATION IN THE CIA COMPLEX</scope>
</reference>
<reference key="15">
    <citation type="journal article" date="2013" name="Cell Metab.">
        <title>Human CIA2A-FAM96A and CIA2B-FAM96B integrate iron homeostasis and maturation of different subsets of cytosolic-nuclear iron-sulfur proteins.</title>
        <authorList>
            <person name="Stehling O."/>
            <person name="Mascarenhas J."/>
            <person name="Vashisht A.A."/>
            <person name="Sheftel A.D."/>
            <person name="Niggemeyer B."/>
            <person name="Roesser R."/>
            <person name="Pierik A.J."/>
            <person name="Wohlschlegel J.A."/>
            <person name="Lill R."/>
        </authorList>
    </citation>
    <scope>FUNCTION</scope>
    <scope>IDENTIFICATION IN THE CIA COMPLEX</scope>
    <scope>INTERACTION WITH CHD1L; CIAO2A; CIAO2B; ERCC2; IREB2; MMS19 AND POLD1</scope>
</reference>
<reference key="16">
    <citation type="journal article" date="2018" name="Cell Metab.">
        <title>Human CIA2A-FAM96A and CIA2B-FAM96B Integrate Iron Homeostasis and Maturation of Different Subsets of Cytosolic-Nuclear Iron-Sulfur Proteins.</title>
        <authorList>
            <person name="Stehling O."/>
            <person name="Mascarenhas J."/>
            <person name="Vashisht A.A."/>
            <person name="Sheftel A.D."/>
            <person name="Niggemeyer B."/>
            <person name="Roesser R."/>
            <person name="Pierik A.J."/>
            <person name="Wohlschlegel J.A."/>
            <person name="Lill R."/>
        </authorList>
    </citation>
    <scope>ERRATUM OF PUBMED:23891004</scope>
</reference>
<reference key="17">
    <citation type="journal article" date="2013" name="J. Biol. Chem.">
        <title>IOP1 protein is an external component of the human cytosolic iron-sulfur cluster assembly (CIA) machinery and functions in the MMS19 protein-dependent CIA pathway.</title>
        <authorList>
            <person name="Seki M."/>
            <person name="Takeda Y."/>
            <person name="Iwai K."/>
            <person name="Tanaka K."/>
        </authorList>
    </citation>
    <scope>IDENTIFICATION IN THE CIA COMPLEX</scope>
    <scope>SUBCELLULAR LOCATION</scope>
    <scope>INTERACTION WITH CIAO2B AND CIAO3</scope>
</reference>
<reference key="18">
    <citation type="journal article" date="2014" name="J. Proteomics">
        <title>An enzyme assisted RP-RPLC approach for in-depth analysis of human liver phosphoproteome.</title>
        <authorList>
            <person name="Bian Y."/>
            <person name="Song C."/>
            <person name="Cheng K."/>
            <person name="Dong M."/>
            <person name="Wang F."/>
            <person name="Huang J."/>
            <person name="Sun D."/>
            <person name="Wang L."/>
            <person name="Ye M."/>
            <person name="Zou H."/>
        </authorList>
    </citation>
    <scope>IDENTIFICATION BY MASS SPECTROMETRY [LARGE SCALE ANALYSIS]</scope>
    <source>
        <tissue>Liver</tissue>
    </source>
</reference>
<reference key="19">
    <citation type="journal article" date="2018" name="Hum. Mol. Genet.">
        <title>Cytosolic HSC20 integrates de novo iron-sulfur cluster biogenesis with the CIAO1-mediated transfer to recipients.</title>
        <authorList>
            <person name="Kim K.S."/>
            <person name="Maio N."/>
            <person name="Singh A."/>
            <person name="Rouault T.A."/>
        </authorList>
    </citation>
    <scope>INTERACTION WITH HSC20</scope>
    <scope>ROLE OF LYR MOTIF</scope>
    <scope>MUTAGENESIS OF 87-ILE--ARG-89 AND 176-LYS--ARG-178</scope>
</reference>
<reference key="20">
    <citation type="journal article" date="2024" name="J. Clin. Invest.">
        <title>CIAO1 loss of function causes a neuromuscular disorder with compromise of nucleocytoplasmic Fe-S enzymes.</title>
        <authorList>
            <person name="Maio N."/>
            <person name="Orbach R."/>
            <person name="Zaharieva I.T."/>
            <person name="Toepf A."/>
            <person name="Donkervoort S."/>
            <person name="Munot P."/>
            <person name="Mueller J."/>
            <person name="Willis T."/>
            <person name="Verma S."/>
            <person name="Peric S."/>
            <person name="Krishnakumar D."/>
            <person name="Sudhakar S."/>
            <person name="Foley A.R."/>
            <person name="Silverstein S."/>
            <person name="Douglas G."/>
            <person name="Pais L."/>
            <person name="DiTroia S."/>
            <person name="Grunseich C."/>
            <person name="Hu Y."/>
            <person name="Sewry C."/>
            <person name="Sarkozy A."/>
            <person name="Straub V."/>
            <person name="Muntoni F."/>
            <person name="Rouault T.A."/>
            <person name="Boennemann C.G."/>
        </authorList>
    </citation>
    <scope>VARIANTS MMDS10 TRP-65; GLY-171; LEU-251 AND PRO-302</scope>
    <scope>CHARACTERIZATION OF VARIANTS MMDS10 TRP-65; GLY-171; LEU-251 AND PRO-302</scope>
    <scope>FUNCTION</scope>
    <scope>INVOLVEMENT IN MMDS10</scope>
    <scope>SUBUNIT</scope>
</reference>
<reference key="21">
    <citation type="journal article" date="2011" name="Protein Cell">
        <title>Structure and function of WD40 domain proteins.</title>
        <authorList>
            <person name="Xu C."/>
            <person name="Min J."/>
        </authorList>
    </citation>
    <scope>X-RAY CRYSTALLOGRAPHY (1.7 ANGSTROMS)</scope>
</reference>
<keyword id="KW-0002">3D-structure</keyword>
<keyword id="KW-0159">Chromosome partition</keyword>
<keyword id="KW-0963">Cytoplasm</keyword>
<keyword id="KW-0225">Disease variant</keyword>
<keyword id="KW-1267">Proteomics identification</keyword>
<keyword id="KW-1185">Reference proteome</keyword>
<keyword id="KW-0677">Repeat</keyword>
<keyword id="KW-0853">WD repeat</keyword>
<accession>O76071</accession>
<accession>A0MNN9</accession>
<accession>Q53FM5</accession>
<feature type="chain" id="PRO_0000051389" description="Probable cytosolic iron-sulfur protein assembly protein CIAO1">
    <location>
        <begin position="1"/>
        <end position="339"/>
    </location>
</feature>
<feature type="repeat" description="WD 1">
    <location>
        <begin position="14"/>
        <end position="53"/>
    </location>
</feature>
<feature type="repeat" description="WD 2">
    <location>
        <begin position="59"/>
        <end position="98"/>
    </location>
</feature>
<feature type="repeat" description="WD 3">
    <location>
        <begin position="103"/>
        <end position="142"/>
    </location>
</feature>
<feature type="repeat" description="WD 4">
    <location>
        <begin position="148"/>
        <end position="187"/>
    </location>
</feature>
<feature type="repeat" description="WD 5">
    <location>
        <begin position="192"/>
        <end position="231"/>
    </location>
</feature>
<feature type="repeat" description="WD 6">
    <location>
        <begin position="250"/>
        <end position="289"/>
    </location>
</feature>
<feature type="repeat" description="WD 7">
    <location>
        <begin position="301"/>
        <end position="339"/>
    </location>
</feature>
<feature type="short sequence motif" description="LYR motif; required for interaction with HSC20" evidence="9">
    <location>
        <begin position="176"/>
        <end position="178"/>
    </location>
</feature>
<feature type="sequence variant" id="VAR_090034" description="In MMDS10; likely pathogenic; affects the interaction with components of cytosolic [4Fe-4S] assembly targeting complex; decreased interaction with CIAO2B and MMS19; loss of interaction with ERCC2 and POLD1; decreased interaction with HSC20; dbSNP:rs11544859." evidence="10">
    <original>R</original>
    <variation>W</variation>
    <location>
        <position position="65"/>
    </location>
</feature>
<feature type="sequence variant" id="VAR_090035" description="In MMDS10; likely pathogenic; affects the interaction with components of cytosolic [4Fe-4S] assembly targeting complex; decreased interaction with CIAO2B and MMS19; loss of interaction with ERCC2 and POLD1; decreased interaction with HSC20." evidence="10">
    <original>D</original>
    <variation>G</variation>
    <location>
        <position position="171"/>
    </location>
</feature>
<feature type="sequence variant" id="VAR_090036" description="In MMDS10; likely pathogenic; affects the interaction with components of cytosolic [4Fe-4S] assembly targeting complex; decreased interaction with CIAO2B and MMS19; loss of interaction with ERCC2 and POLD1; decreased interaction with HSC20; dbSNP:rs748223775." evidence="10">
    <original>H</original>
    <variation>L</variation>
    <location>
        <position position="251"/>
    </location>
</feature>
<feature type="sequence variant" id="VAR_090037" description="In MMDS10; pathogenic; affects the interaction with components of cytosolic [4Fe-4S] assembly targeting complex; loss of interaction with CIAO2B and MMS19; loss of interaction with ERCC2 and POLD1; loss of interaction with HSC20; dbSNP:rs756234455." evidence="10">
    <original>H</original>
    <variation>P</variation>
    <location>
        <position position="302"/>
    </location>
</feature>
<feature type="mutagenesis site" description="Does not affect binding to HSC20." evidence="9">
    <original>IWK</original>
    <variation>AAA</variation>
    <location>
        <begin position="87"/>
        <end position="89"/>
    </location>
</feature>
<feature type="mutagenesis site" description="Abolishes binding to HSC20." evidence="9">
    <original>LYR</original>
    <variation>AAA</variation>
    <location>
        <begin position="176"/>
        <end position="178"/>
    </location>
</feature>
<feature type="sequence conflict" description="In Ref. 5; BAD96977." evidence="13" ref="5">
    <original>C</original>
    <variation>G</variation>
    <location>
        <position position="243"/>
    </location>
</feature>
<feature type="strand" evidence="14">
    <location>
        <begin position="5"/>
        <end position="11"/>
    </location>
</feature>
<feature type="strand" evidence="14">
    <location>
        <begin position="19"/>
        <end position="24"/>
    </location>
</feature>
<feature type="strand" evidence="14">
    <location>
        <begin position="31"/>
        <end position="35"/>
    </location>
</feature>
<feature type="strand" evidence="14">
    <location>
        <begin position="40"/>
        <end position="46"/>
    </location>
</feature>
<feature type="strand" evidence="14">
    <location>
        <begin position="49"/>
        <end position="56"/>
    </location>
</feature>
<feature type="strand" evidence="14">
    <location>
        <begin position="64"/>
        <end position="69"/>
    </location>
</feature>
<feature type="strand" evidence="14">
    <location>
        <begin position="73"/>
        <end position="80"/>
    </location>
</feature>
<feature type="strand" evidence="14">
    <location>
        <begin position="85"/>
        <end position="90"/>
    </location>
</feature>
<feature type="strand" evidence="14">
    <location>
        <begin position="95"/>
        <end position="101"/>
    </location>
</feature>
<feature type="strand" evidence="14">
    <location>
        <begin position="108"/>
        <end position="113"/>
    </location>
</feature>
<feature type="strand" evidence="14">
    <location>
        <begin position="117"/>
        <end position="124"/>
    </location>
</feature>
<feature type="strand" evidence="14">
    <location>
        <begin position="129"/>
        <end position="134"/>
    </location>
</feature>
<feature type="strand" evidence="14">
    <location>
        <begin position="140"/>
        <end position="146"/>
    </location>
</feature>
<feature type="strand" evidence="14">
    <location>
        <begin position="153"/>
        <end position="158"/>
    </location>
</feature>
<feature type="strand" evidence="14">
    <location>
        <begin position="160"/>
        <end position="163"/>
    </location>
</feature>
<feature type="strand" evidence="14">
    <location>
        <begin position="165"/>
        <end position="169"/>
    </location>
</feature>
<feature type="strand" evidence="14">
    <location>
        <begin position="174"/>
        <end position="180"/>
    </location>
</feature>
<feature type="strand" evidence="14">
    <location>
        <begin position="183"/>
        <end position="190"/>
    </location>
</feature>
<feature type="strand" evidence="14">
    <location>
        <begin position="197"/>
        <end position="202"/>
    </location>
</feature>
<feature type="strand" evidence="14">
    <location>
        <begin position="206"/>
        <end position="213"/>
    </location>
</feature>
<feature type="strand" evidence="14">
    <location>
        <begin position="218"/>
        <end position="224"/>
    </location>
</feature>
<feature type="strand" evidence="14">
    <location>
        <begin position="240"/>
        <end position="247"/>
    </location>
</feature>
<feature type="strand" evidence="14">
    <location>
        <begin position="255"/>
        <end position="260"/>
    </location>
</feature>
<feature type="turn" evidence="14">
    <location>
        <begin position="262"/>
        <end position="264"/>
    </location>
</feature>
<feature type="strand" evidence="14">
    <location>
        <begin position="267"/>
        <end position="271"/>
    </location>
</feature>
<feature type="strand" evidence="14">
    <location>
        <begin position="276"/>
        <end position="281"/>
    </location>
</feature>
<feature type="strand" evidence="14">
    <location>
        <begin position="292"/>
        <end position="298"/>
    </location>
</feature>
<feature type="strand" evidence="14">
    <location>
        <begin position="301"/>
        <end position="304"/>
    </location>
</feature>
<feature type="strand" evidence="14">
    <location>
        <begin position="306"/>
        <end position="311"/>
    </location>
</feature>
<feature type="strand" evidence="14">
    <location>
        <begin position="313"/>
        <end position="315"/>
    </location>
</feature>
<feature type="strand" evidence="14">
    <location>
        <begin position="318"/>
        <end position="323"/>
    </location>
</feature>
<feature type="strand" evidence="14">
    <location>
        <begin position="328"/>
        <end position="333"/>
    </location>
</feature>
<organism>
    <name type="scientific">Homo sapiens</name>
    <name type="common">Human</name>
    <dbReference type="NCBI Taxonomy" id="9606"/>
    <lineage>
        <taxon>Eukaryota</taxon>
        <taxon>Metazoa</taxon>
        <taxon>Chordata</taxon>
        <taxon>Craniata</taxon>
        <taxon>Vertebrata</taxon>
        <taxon>Euteleostomi</taxon>
        <taxon>Mammalia</taxon>
        <taxon>Eutheria</taxon>
        <taxon>Euarchontoglires</taxon>
        <taxon>Primates</taxon>
        <taxon>Haplorrhini</taxon>
        <taxon>Catarrhini</taxon>
        <taxon>Hominidae</taxon>
        <taxon>Homo</taxon>
    </lineage>
</organism>
<dbReference type="EMBL" id="U63810">
    <property type="protein sequence ID" value="AAC24948.1"/>
    <property type="molecule type" value="mRNA"/>
</dbReference>
<dbReference type="EMBL" id="EF011618">
    <property type="protein sequence ID" value="ABK41108.1"/>
    <property type="molecule type" value="mRNA"/>
</dbReference>
<dbReference type="EMBL" id="AC004020">
    <property type="protein sequence ID" value="AAC23493.1"/>
    <property type="molecule type" value="Genomic_DNA"/>
</dbReference>
<dbReference type="EMBL" id="CR456802">
    <property type="protein sequence ID" value="CAG33083.1"/>
    <property type="molecule type" value="mRNA"/>
</dbReference>
<dbReference type="EMBL" id="AK223257">
    <property type="protein sequence ID" value="BAD96977.1"/>
    <property type="molecule type" value="mRNA"/>
</dbReference>
<dbReference type="EMBL" id="BC001395">
    <property type="protein sequence ID" value="AAH01395.1"/>
    <property type="molecule type" value="mRNA"/>
</dbReference>
<dbReference type="EMBL" id="BC032812">
    <property type="protein sequence ID" value="AAH32812.1"/>
    <property type="molecule type" value="mRNA"/>
</dbReference>
<dbReference type="CCDS" id="CCDS2019.1"/>
<dbReference type="RefSeq" id="NP_004795.1">
    <property type="nucleotide sequence ID" value="NM_004804.3"/>
</dbReference>
<dbReference type="PDB" id="3FM0">
    <property type="method" value="X-ray"/>
    <property type="resolution" value="1.70 A"/>
    <property type="chains" value="A=1-339"/>
</dbReference>
<dbReference type="PDBsum" id="3FM0"/>
<dbReference type="SMR" id="O76071"/>
<dbReference type="BioGRID" id="114791">
    <property type="interactions" value="333"/>
</dbReference>
<dbReference type="ComplexPortal" id="CPX-2837">
    <property type="entry name" value="CIAO1-CIAO2B-CIAO3-MMS19 cytosolic iron-sulfur protein assembly complex"/>
</dbReference>
<dbReference type="ComplexPortal" id="CPX-2840">
    <property type="entry name" value="CIAO1-CIAO2A-CIAO3 cytosolic iron-sulfur protein assembly complex"/>
</dbReference>
<dbReference type="CORUM" id="O76071"/>
<dbReference type="FunCoup" id="O76071">
    <property type="interactions" value="2094"/>
</dbReference>
<dbReference type="IntAct" id="O76071">
    <property type="interactions" value="107"/>
</dbReference>
<dbReference type="MINT" id="O76071"/>
<dbReference type="STRING" id="9606.ENSP00000418287"/>
<dbReference type="GlyGen" id="O76071">
    <property type="glycosylation" value="1 site, 1 O-linked glycan (1 site)"/>
</dbReference>
<dbReference type="iPTMnet" id="O76071"/>
<dbReference type="MetOSite" id="O76071"/>
<dbReference type="PhosphoSitePlus" id="O76071"/>
<dbReference type="SwissPalm" id="O76071"/>
<dbReference type="BioMuta" id="CIAO1"/>
<dbReference type="jPOST" id="O76071"/>
<dbReference type="MassIVE" id="O76071"/>
<dbReference type="PaxDb" id="9606-ENSP00000418287"/>
<dbReference type="PeptideAtlas" id="O76071"/>
<dbReference type="ProteomicsDB" id="50373"/>
<dbReference type="Pumba" id="O76071"/>
<dbReference type="TopDownProteomics" id="O76071"/>
<dbReference type="ABCD" id="O76071">
    <property type="antibodies" value="1 sequenced antibody"/>
</dbReference>
<dbReference type="Antibodypedia" id="17416">
    <property type="antibodies" value="246 antibodies from 29 providers"/>
</dbReference>
<dbReference type="DNASU" id="9391"/>
<dbReference type="Ensembl" id="ENST00000488633.2">
    <property type="protein sequence ID" value="ENSP00000418287.1"/>
    <property type="gene ID" value="ENSG00000144021.3"/>
</dbReference>
<dbReference type="GeneID" id="9391"/>
<dbReference type="KEGG" id="hsa:9391"/>
<dbReference type="MANE-Select" id="ENST00000488633.2">
    <property type="protein sequence ID" value="ENSP00000418287.1"/>
    <property type="RefSeq nucleotide sequence ID" value="NM_004804.3"/>
    <property type="RefSeq protein sequence ID" value="NP_004795.1"/>
</dbReference>
<dbReference type="UCSC" id="uc002svs.4">
    <property type="organism name" value="human"/>
</dbReference>
<dbReference type="AGR" id="HGNC:14280"/>
<dbReference type="CTD" id="9391"/>
<dbReference type="DisGeNET" id="9391"/>
<dbReference type="GeneCards" id="CIAO1"/>
<dbReference type="HGNC" id="HGNC:14280">
    <property type="gene designation" value="CIAO1"/>
</dbReference>
<dbReference type="HPA" id="ENSG00000144021">
    <property type="expression patterns" value="Low tissue specificity"/>
</dbReference>
<dbReference type="MalaCards" id="CIAO1"/>
<dbReference type="MIM" id="604333">
    <property type="type" value="gene"/>
</dbReference>
<dbReference type="MIM" id="620960">
    <property type="type" value="phenotype"/>
</dbReference>
<dbReference type="neXtProt" id="NX_O76071"/>
<dbReference type="OpenTargets" id="ENSG00000144021"/>
<dbReference type="PharmGKB" id="PA162382269"/>
<dbReference type="VEuPathDB" id="HostDB:ENSG00000144021"/>
<dbReference type="eggNOG" id="KOG0645">
    <property type="taxonomic scope" value="Eukaryota"/>
</dbReference>
<dbReference type="GeneTree" id="ENSGT00940000158670"/>
<dbReference type="HOGENOM" id="CLU_000288_57_8_1"/>
<dbReference type="InParanoid" id="O76071"/>
<dbReference type="OMA" id="IREIRWS"/>
<dbReference type="OrthoDB" id="284782at2759"/>
<dbReference type="PAN-GO" id="O76071">
    <property type="GO annotations" value="2 GO annotations based on evolutionary models"/>
</dbReference>
<dbReference type="PhylomeDB" id="O76071"/>
<dbReference type="TreeFam" id="TF318181"/>
<dbReference type="PathwayCommons" id="O76071"/>
<dbReference type="Reactome" id="R-HSA-2564830">
    <property type="pathway name" value="Cytosolic iron-sulfur cluster assembly"/>
</dbReference>
<dbReference type="SignaLink" id="O76071"/>
<dbReference type="BioGRID-ORCS" id="9391">
    <property type="hits" value="705 hits in 1170 CRISPR screens"/>
</dbReference>
<dbReference type="ChiTaRS" id="CIAO1">
    <property type="organism name" value="human"/>
</dbReference>
<dbReference type="EvolutionaryTrace" id="O76071"/>
<dbReference type="GeneWiki" id="CIAO1"/>
<dbReference type="GenomeRNAi" id="9391"/>
<dbReference type="Pharos" id="O76071">
    <property type="development level" value="Tbio"/>
</dbReference>
<dbReference type="PRO" id="PR:O76071"/>
<dbReference type="Proteomes" id="UP000005640">
    <property type="component" value="Chromosome 2"/>
</dbReference>
<dbReference type="RNAct" id="O76071">
    <property type="molecule type" value="protein"/>
</dbReference>
<dbReference type="Bgee" id="ENSG00000144021">
    <property type="expression patterns" value="Expressed in right adrenal gland cortex and 196 other cell types or tissues"/>
</dbReference>
<dbReference type="GO" id="GO:0005737">
    <property type="term" value="C:cytoplasm"/>
    <property type="evidence" value="ECO:0000314"/>
    <property type="project" value="UniProtKB"/>
</dbReference>
<dbReference type="GO" id="GO:0097361">
    <property type="term" value="C:cytosolic [4Fe-4S] assembly targeting complex"/>
    <property type="evidence" value="ECO:0000314"/>
    <property type="project" value="UniProtKB"/>
</dbReference>
<dbReference type="GO" id="GO:0071817">
    <property type="term" value="C:MMXD complex"/>
    <property type="evidence" value="ECO:0000314"/>
    <property type="project" value="UniProtKB"/>
</dbReference>
<dbReference type="GO" id="GO:0007059">
    <property type="term" value="P:chromosome segregation"/>
    <property type="evidence" value="ECO:0007669"/>
    <property type="project" value="UniProtKB-KW"/>
</dbReference>
<dbReference type="GO" id="GO:0016226">
    <property type="term" value="P:iron-sulfur cluster assembly"/>
    <property type="evidence" value="ECO:0000318"/>
    <property type="project" value="GO_Central"/>
</dbReference>
<dbReference type="GO" id="GO:0051604">
    <property type="term" value="P:protein maturation"/>
    <property type="evidence" value="ECO:0000315"/>
    <property type="project" value="UniProtKB"/>
</dbReference>
<dbReference type="GO" id="GO:0006357">
    <property type="term" value="P:regulation of transcription by RNA polymerase II"/>
    <property type="evidence" value="ECO:0000304"/>
    <property type="project" value="ProtInc"/>
</dbReference>
<dbReference type="CDD" id="cd00200">
    <property type="entry name" value="WD40"/>
    <property type="match status" value="1"/>
</dbReference>
<dbReference type="FunFam" id="2.130.10.10:FF:000136">
    <property type="entry name" value="Probable cytosolic iron-sulfur protein assembly protein CIAO1"/>
    <property type="match status" value="1"/>
</dbReference>
<dbReference type="Gene3D" id="2.130.10.10">
    <property type="entry name" value="YVTN repeat-like/Quinoprotein amine dehydrogenase"/>
    <property type="match status" value="1"/>
</dbReference>
<dbReference type="HAMAP" id="MF_03037">
    <property type="entry name" value="ciao1"/>
    <property type="match status" value="1"/>
</dbReference>
<dbReference type="InterPro" id="IPR028608">
    <property type="entry name" value="CIAO1/Cia1"/>
</dbReference>
<dbReference type="InterPro" id="IPR015943">
    <property type="entry name" value="WD40/YVTN_repeat-like_dom_sf"/>
</dbReference>
<dbReference type="InterPro" id="IPR019775">
    <property type="entry name" value="WD40_repeat_CS"/>
</dbReference>
<dbReference type="InterPro" id="IPR036322">
    <property type="entry name" value="WD40_repeat_dom_sf"/>
</dbReference>
<dbReference type="InterPro" id="IPR001680">
    <property type="entry name" value="WD40_rpt"/>
</dbReference>
<dbReference type="PANTHER" id="PTHR19920:SF0">
    <property type="entry name" value="CYTOSOLIC IRON-SULFUR PROTEIN ASSEMBLY PROTEIN CIAO1-RELATED"/>
    <property type="match status" value="1"/>
</dbReference>
<dbReference type="PANTHER" id="PTHR19920">
    <property type="entry name" value="WD40 PROTEIN CIAO1"/>
    <property type="match status" value="1"/>
</dbReference>
<dbReference type="Pfam" id="PF00400">
    <property type="entry name" value="WD40"/>
    <property type="match status" value="7"/>
</dbReference>
<dbReference type="SMART" id="SM00320">
    <property type="entry name" value="WD40"/>
    <property type="match status" value="7"/>
</dbReference>
<dbReference type="SUPFAM" id="SSF50978">
    <property type="entry name" value="WD40 repeat-like"/>
    <property type="match status" value="1"/>
</dbReference>
<dbReference type="PROSITE" id="PS00678">
    <property type="entry name" value="WD_REPEATS_1"/>
    <property type="match status" value="1"/>
</dbReference>
<dbReference type="PROSITE" id="PS50082">
    <property type="entry name" value="WD_REPEATS_2"/>
    <property type="match status" value="6"/>
</dbReference>
<dbReference type="PROSITE" id="PS50294">
    <property type="entry name" value="WD_REPEATS_REGION"/>
    <property type="match status" value="1"/>
</dbReference>
<name>CIAO1_HUMAN</name>
<protein>
    <recommendedName>
        <fullName evidence="1">Probable cytosolic iron-sulfur protein assembly protein CIAO1</fullName>
    </recommendedName>
    <alternativeName>
        <fullName evidence="1">WD repeat-containing protein 39</fullName>
    </alternativeName>
</protein>
<sequence length="339" mass="37840">MKDSLVLLGRVPAHPDSRCWFLAWNPAGTLLASCGGDRRIRIWGTEGDSWICKSVLSEGHQRTVRKVAWSPCGNYLASASFDATTCIWKKNQDDFECVTTLEGHENEVKSVAWAPSGNLLATCSRDKSVWVWEVDEEDEYECVSVLNSHTQDVKHVVWHPSQELLASASYDDTVKLYREEEDDWVCCATLEGHESTVWSLAFDPSGQRLASCSDDRTVRIWRQYLPGNEQGVACSGSDPSWKCICTLSGFHSRTIYDIAWCQLTGALATACGDDAIRVFQEDPNSDPQQPTFSLTAHLHQAHSQDVNCVAWNPKEPGLLASCSDDGEVAFWKYQRPEGL</sequence>
<comment type="function">
    <text evidence="1 2 3 8 10 11">Key component of the cytosolic iron-sulfur protein assembly (CIA) complex, a multiprotein complex that mediates the incorporation of iron-sulfur cluster into extramitochondrial Fe/S proteins (PubMed:17937914, PubMed:23891004, PubMed:38950322). As a CIA complex component, interacts specifically with CIAO2A or CIAO2B and MMS19 to assist different branches of iron-sulfur protein assembly, depending of its interactors. The complex CIAO1:CIAO2B:MMS19 binds to and facilitates the assembly of most cytosolic-nuclear Fe/S proteins. CIAO1:CIAO2A specifically matures ACO1 and stabilizes IREB2 (PubMed:23891004). Seems to specifically modulate the transactivation activity of WT1 (PubMed:9556563). As part of the mitotic spindle-associated MMXD complex it may play a role in chromosome segregation (PubMed:20797633).</text>
</comment>
<comment type="subunit">
    <text evidence="1 3 4 5 6 7 8 9 10 11">Component of the CIA complex (PubMed:22678361, PubMed:22678362, PubMed:23585563, PubMed:38950322). Interacts with CIAO2A and forms a complex with CIAO2B and MMS19; the interactions with CIAO2A and CIAO2B are mutually exclusive (PubMed:22683786, PubMed:23585563, PubMed:23891004, PubMed:38950322). Interacts with CHD1L, ERCC2, IREB2 and POLD1 (PubMed:23891004, PubMed:38950322). Component of the MMXD complex, which includes CIAO1, ERCC2, CIAO2B, MMS19 and SLC25A5 (PubMed:20797633). Interacts with WT1 (PubMed:9556563). Interacts with CIAO3 (PubMed:23585563). Interacts (via LYR motif) with HSC20 (PubMed:29309586, PubMed:38950322).</text>
</comment>
<comment type="interaction">
    <interactant intactId="EBI-725145">
        <id>O76071</id>
    </interactant>
    <interactant intactId="EBI-14493093">
        <id>Q3KP44</id>
        <label>ANKRD55</label>
    </interactant>
    <organismsDiffer>false</organismsDiffer>
    <experiments>3</experiments>
</comment>
<comment type="interaction">
    <interactant intactId="EBI-725145">
        <id>O76071</id>
    </interactant>
    <interactant intactId="EBI-18333234">
        <id>Q6NX55</id>
        <label>C19orf2</label>
    </interactant>
    <organismsDiffer>false</organismsDiffer>
    <experiments>3</experiments>
</comment>
<comment type="interaction">
    <interactant intactId="EBI-725145">
        <id>O76071</id>
    </interactant>
    <interactant intactId="EBI-752069">
        <id>Q9H5X1</id>
        <label>CIAO2A</label>
    </interactant>
    <organismsDiffer>false</organismsDiffer>
    <experiments>19</experiments>
</comment>
<comment type="interaction">
    <interactant intactId="EBI-725145">
        <id>O76071</id>
    </interactant>
    <interactant intactId="EBI-744045">
        <id>Q9Y3D0</id>
        <label>CIAO2B</label>
    </interactant>
    <organismsDiffer>false</organismsDiffer>
    <experiments>24</experiments>
</comment>
<comment type="interaction">
    <interactant intactId="EBI-725145">
        <id>O76071</id>
    </interactant>
    <interactant intactId="EBI-6380590">
        <id>P18074</id>
        <label>ERCC2</label>
    </interactant>
    <organismsDiffer>false</organismsDiffer>
    <experiments>2</experiments>
</comment>
<comment type="interaction">
    <interactant intactId="EBI-725145">
        <id>O76071</id>
    </interactant>
    <interactant intactId="EBI-2558217">
        <id>Q68CZ6</id>
        <label>HAUS3</label>
    </interactant>
    <organismsDiffer>false</organismsDiffer>
    <experiments>3</experiments>
</comment>
<comment type="interaction">
    <interactant intactId="EBI-725145">
        <id>O76071</id>
    </interactant>
    <interactant intactId="EBI-2864512">
        <id>P50221</id>
        <label>MEOX1</label>
    </interactant>
    <organismsDiffer>false</organismsDiffer>
    <experiments>3</experiments>
</comment>
<comment type="interaction">
    <interactant intactId="EBI-725145">
        <id>O76071</id>
    </interactant>
    <interactant intactId="EBI-16439278">
        <id>Q6FHY5</id>
        <label>MEOX2</label>
    </interactant>
    <organismsDiffer>false</organismsDiffer>
    <experiments>3</experiments>
</comment>
<comment type="interaction">
    <interactant intactId="EBI-725145">
        <id>O76071</id>
    </interactant>
    <interactant intactId="EBI-1044169">
        <id>Q96T76</id>
        <label>MMS19</label>
    </interactant>
    <organismsDiffer>false</organismsDiffer>
    <experiments>15</experiments>
</comment>
<comment type="interaction">
    <interactant intactId="EBI-725145">
        <id>O76071</id>
    </interactant>
    <interactant intactId="EBI-10190644">
        <id>Q96T76-8</id>
        <label>MMS19</label>
    </interactant>
    <organismsDiffer>false</organismsDiffer>
    <experiments>5</experiments>
</comment>
<comment type="interaction">
    <interactant intactId="EBI-725145">
        <id>O76071</id>
    </interactant>
    <interactant intactId="EBI-1045534">
        <id>O00264</id>
        <label>PGRMC1</label>
    </interactant>
    <organismsDiffer>false</organismsDiffer>
    <experiments>5</experiments>
</comment>
<comment type="interaction">
    <interactant intactId="EBI-725145">
        <id>O76071</id>
    </interactant>
    <interactant intactId="EBI-712388">
        <id>P41220</id>
        <label>RGS2</label>
    </interactant>
    <organismsDiffer>false</organismsDiffer>
    <experiments>3</experiments>
</comment>
<comment type="interaction">
    <interactant intactId="EBI-725145">
        <id>O76071</id>
    </interactant>
    <interactant intactId="EBI-12736320">
        <id>Q8WXG1</id>
        <label>RSAD2</label>
    </interactant>
    <organismsDiffer>false</organismsDiffer>
    <experiments>2</experiments>
</comment>
<comment type="interaction">
    <interactant intactId="EBI-725145">
        <id>O76071</id>
    </interactant>
    <interactant intactId="EBI-744603">
        <id>Q15637</id>
        <label>SF1</label>
    </interactant>
    <organismsDiffer>false</organismsDiffer>
    <experiments>3</experiments>
</comment>
<comment type="interaction">
    <interactant intactId="EBI-725145">
        <id>O76071</id>
    </interactant>
    <interactant intactId="EBI-12037847">
        <id>Q6ZSJ9</id>
        <label>SHISA6</label>
    </interactant>
    <organismsDiffer>false</organismsDiffer>
    <experiments>3</experiments>
</comment>
<comment type="interaction">
    <interactant intactId="EBI-725145">
        <id>O76071</id>
    </interactant>
    <interactant intactId="EBI-1044546">
        <id>Q9Y6M7</id>
        <label>SLC4A7</label>
    </interactant>
    <organismsDiffer>false</organismsDiffer>
    <experiments>3</experiments>
</comment>
<comment type="interaction">
    <interactant intactId="EBI-725145">
        <id>O76071</id>
    </interactant>
    <interactant intactId="EBI-3923210">
        <id>Q8TDR4</id>
        <label>TCP10L</label>
    </interactant>
    <organismsDiffer>false</organismsDiffer>
    <experiments>3</experiments>
</comment>
<comment type="interaction">
    <interactant intactId="EBI-725145">
        <id>O76071</id>
    </interactant>
    <interactant intactId="EBI-373403">
        <id>O95985</id>
        <label>TOP3B</label>
    </interactant>
    <organismsDiffer>false</organismsDiffer>
    <experiments>4</experiments>
</comment>
<comment type="subcellular location">
    <subcellularLocation>
        <location evidence="7">Cytoplasm</location>
    </subcellularLocation>
</comment>
<comment type="disease" evidence="10">
    <disease id="DI-06947">
        <name>Multiple mitochondrial dysfunctions syndrome 10</name>
        <acronym>MMDS10</acronym>
        <description>An autosomal recessive disorder characterized by proximal and axial muscle weakness, fluctuating creatine kinase elevation, and respiratory insufficiency. Additional features include learning difficulties and neurobehavioral comorbidities. Some affected individuals have mild normocytic to macrocytic anemia. Brain imaging shows increased iron deposition in deep brain nuclei in some patients.</description>
        <dbReference type="MIM" id="620960"/>
    </disease>
    <text>The disease is caused by variants affecting the gene represented in this entry.</text>
</comment>
<comment type="miscellaneous">
    <text>'Ciao' means 'bridge' in Chinese.</text>
</comment>
<comment type="similarity">
    <text evidence="1">Belongs to the WD repeat CIA1 family.</text>
</comment>
<proteinExistence type="evidence at protein level"/>
<evidence type="ECO:0000255" key="1">
    <source>
        <dbReference type="HAMAP-Rule" id="MF_03037"/>
    </source>
</evidence>
<evidence type="ECO:0000269" key="2">
    <source>
    </source>
</evidence>
<evidence type="ECO:0000269" key="3">
    <source>
    </source>
</evidence>
<evidence type="ECO:0000269" key="4">
    <source>
    </source>
</evidence>
<evidence type="ECO:0000269" key="5">
    <source>
    </source>
</evidence>
<evidence type="ECO:0000269" key="6">
    <source>
    </source>
</evidence>
<evidence type="ECO:0000269" key="7">
    <source>
    </source>
</evidence>
<evidence type="ECO:0000269" key="8">
    <source>
    </source>
</evidence>
<evidence type="ECO:0000269" key="9">
    <source>
    </source>
</evidence>
<evidence type="ECO:0000269" key="10">
    <source>
    </source>
</evidence>
<evidence type="ECO:0000269" key="11">
    <source>
    </source>
</evidence>
<evidence type="ECO:0000303" key="12">
    <source>
    </source>
</evidence>
<evidence type="ECO:0000305" key="13"/>
<evidence type="ECO:0007829" key="14">
    <source>
        <dbReference type="PDB" id="3FM0"/>
    </source>
</evidence>